<evidence type="ECO:0000255" key="1">
    <source>
        <dbReference type="PROSITE-ProRule" id="PRU00977"/>
    </source>
</evidence>
<evidence type="ECO:0000305" key="2"/>
<name>Y2523_STAHJ</name>
<accession>Q4L3E5</accession>
<protein>
    <recommendedName>
        <fullName>UPF0213 protein SH2523</fullName>
    </recommendedName>
</protein>
<sequence length="82" mass="9702">MAKHYVYIVKCKDNSLYTGYTTNVEARIATHNAGKGAKYTKTRRPVVLVYQEMFSSKSEAMRREYEIKTFSRQQKLKMIEER</sequence>
<organism>
    <name type="scientific">Staphylococcus haemolyticus (strain JCSC1435)</name>
    <dbReference type="NCBI Taxonomy" id="279808"/>
    <lineage>
        <taxon>Bacteria</taxon>
        <taxon>Bacillati</taxon>
        <taxon>Bacillota</taxon>
        <taxon>Bacilli</taxon>
        <taxon>Bacillales</taxon>
        <taxon>Staphylococcaceae</taxon>
        <taxon>Staphylococcus</taxon>
    </lineage>
</organism>
<proteinExistence type="inferred from homology"/>
<gene>
    <name type="ordered locus">SH2523</name>
</gene>
<dbReference type="EMBL" id="AP006716">
    <property type="protein sequence ID" value="BAE05832.1"/>
    <property type="molecule type" value="Genomic_DNA"/>
</dbReference>
<dbReference type="RefSeq" id="WP_011276773.1">
    <property type="nucleotide sequence ID" value="NC_007168.1"/>
</dbReference>
<dbReference type="SMR" id="Q4L3E5"/>
<dbReference type="KEGG" id="sha:SH2523"/>
<dbReference type="eggNOG" id="COG2827">
    <property type="taxonomic scope" value="Bacteria"/>
</dbReference>
<dbReference type="HOGENOM" id="CLU_135650_0_3_9"/>
<dbReference type="OrthoDB" id="9807770at2"/>
<dbReference type="Proteomes" id="UP000000543">
    <property type="component" value="Chromosome"/>
</dbReference>
<dbReference type="CDD" id="cd10456">
    <property type="entry name" value="GIY-YIG_UPF0213"/>
    <property type="match status" value="1"/>
</dbReference>
<dbReference type="Gene3D" id="3.40.1440.10">
    <property type="entry name" value="GIY-YIG endonuclease"/>
    <property type="match status" value="1"/>
</dbReference>
<dbReference type="InterPro" id="IPR000305">
    <property type="entry name" value="GIY-YIG_endonuc"/>
</dbReference>
<dbReference type="InterPro" id="IPR035901">
    <property type="entry name" value="GIY-YIG_endonuc_sf"/>
</dbReference>
<dbReference type="InterPro" id="IPR050190">
    <property type="entry name" value="UPF0213_domain"/>
</dbReference>
<dbReference type="PANTHER" id="PTHR34477">
    <property type="entry name" value="UPF0213 PROTEIN YHBQ"/>
    <property type="match status" value="1"/>
</dbReference>
<dbReference type="PANTHER" id="PTHR34477:SF1">
    <property type="entry name" value="UPF0213 PROTEIN YHBQ"/>
    <property type="match status" value="1"/>
</dbReference>
<dbReference type="Pfam" id="PF01541">
    <property type="entry name" value="GIY-YIG"/>
    <property type="match status" value="1"/>
</dbReference>
<dbReference type="SMART" id="SM00465">
    <property type="entry name" value="GIYc"/>
    <property type="match status" value="1"/>
</dbReference>
<dbReference type="SUPFAM" id="SSF82771">
    <property type="entry name" value="GIY-YIG endonuclease"/>
    <property type="match status" value="1"/>
</dbReference>
<dbReference type="PROSITE" id="PS50164">
    <property type="entry name" value="GIY_YIG"/>
    <property type="match status" value="1"/>
</dbReference>
<feature type="chain" id="PRO_0000161388" description="UPF0213 protein SH2523">
    <location>
        <begin position="1"/>
        <end position="82"/>
    </location>
</feature>
<feature type="domain" description="GIY-YIG" evidence="1">
    <location>
        <begin position="2"/>
        <end position="77"/>
    </location>
</feature>
<comment type="similarity">
    <text evidence="2">Belongs to the UPF0213 family.</text>
</comment>
<reference key="1">
    <citation type="journal article" date="2005" name="J. Bacteriol.">
        <title>Whole-genome sequencing of Staphylococcus haemolyticus uncovers the extreme plasticity of its genome and the evolution of human-colonizing staphylococcal species.</title>
        <authorList>
            <person name="Takeuchi F."/>
            <person name="Watanabe S."/>
            <person name="Baba T."/>
            <person name="Yuzawa H."/>
            <person name="Ito T."/>
            <person name="Morimoto Y."/>
            <person name="Kuroda M."/>
            <person name="Cui L."/>
            <person name="Takahashi M."/>
            <person name="Ankai A."/>
            <person name="Baba S."/>
            <person name="Fukui S."/>
            <person name="Lee J.C."/>
            <person name="Hiramatsu K."/>
        </authorList>
    </citation>
    <scope>NUCLEOTIDE SEQUENCE [LARGE SCALE GENOMIC DNA]</scope>
    <source>
        <strain>JCSC1435</strain>
    </source>
</reference>